<gene>
    <name evidence="1" type="primary">tig</name>
    <name type="ordered locus">SA1499</name>
</gene>
<accession>P99080</accession>
<accession>Q99TI6</accession>
<evidence type="ECO:0000255" key="1">
    <source>
        <dbReference type="HAMAP-Rule" id="MF_00303"/>
    </source>
</evidence>
<feature type="chain" id="PRO_0000179427" description="Trigger factor">
    <location>
        <begin position="1"/>
        <end position="433"/>
    </location>
</feature>
<feature type="domain" description="PPIase FKBP-type" evidence="1">
    <location>
        <begin position="163"/>
        <end position="248"/>
    </location>
</feature>
<sequence>MTATWEKKEGNEGLLTVTVPAEKVNKALDQAFKKVVKQINVPGFRKGKVPRPIFEQRFGVEALYQDAIDILLPDAYGEAIDETDIKPVAQPEVSVTQIEKGKDFIFEATVTVEPEVKLGDYKGLEIEKQETELSDDELQEAIDHSLGHLAEMVVKEDGVVENGDTVNIDFSGSVDGEEFEGGQAEGYDLEIGSGSFIPGFEEQLEGMKVDEEKDVVVTFPEEYHAEELAGKEATFKTKVNEIKFKEVPELTDEIANELDAEANTVDEYKENLRKRLAEQKATDAENVEKEEAITKATDNTTIDIPEAMVNTELDRMVSEFAQRIQQQGLDLQTYFQISGQDETQLREQMKDDAEQRVKTNLTLTAIAEAEKIEATDEDIDKELEKMSKQFNISVEDIKNTLGNTDIIKNDVRIQKVIDLLRDNAKFVEGTKED</sequence>
<proteinExistence type="evidence at protein level"/>
<protein>
    <recommendedName>
        <fullName evidence="1">Trigger factor</fullName>
        <shortName evidence="1">TF</shortName>
        <ecNumber evidence="1">5.2.1.8</ecNumber>
    </recommendedName>
    <alternativeName>
        <fullName evidence="1">PPIase</fullName>
    </alternativeName>
</protein>
<organism>
    <name type="scientific">Staphylococcus aureus (strain N315)</name>
    <dbReference type="NCBI Taxonomy" id="158879"/>
    <lineage>
        <taxon>Bacteria</taxon>
        <taxon>Bacillati</taxon>
        <taxon>Bacillota</taxon>
        <taxon>Bacilli</taxon>
        <taxon>Bacillales</taxon>
        <taxon>Staphylococcaceae</taxon>
        <taxon>Staphylococcus</taxon>
    </lineage>
</organism>
<name>TIG_STAAN</name>
<dbReference type="EC" id="5.2.1.8" evidence="1"/>
<dbReference type="EMBL" id="BA000018">
    <property type="protein sequence ID" value="BAB42766.1"/>
    <property type="molecule type" value="Genomic_DNA"/>
</dbReference>
<dbReference type="PIR" id="A89951">
    <property type="entry name" value="A89951"/>
</dbReference>
<dbReference type="RefSeq" id="WP_000127573.1">
    <property type="nucleotide sequence ID" value="NC_002745.2"/>
</dbReference>
<dbReference type="SMR" id="P99080"/>
<dbReference type="EnsemblBacteria" id="BAB42766">
    <property type="protein sequence ID" value="BAB42766"/>
    <property type="gene ID" value="BAB42766"/>
</dbReference>
<dbReference type="KEGG" id="sau:SA1499"/>
<dbReference type="HOGENOM" id="CLU_033058_3_2_9"/>
<dbReference type="GO" id="GO:0005737">
    <property type="term" value="C:cytoplasm"/>
    <property type="evidence" value="ECO:0007669"/>
    <property type="project" value="UniProtKB-SubCell"/>
</dbReference>
<dbReference type="GO" id="GO:0003755">
    <property type="term" value="F:peptidyl-prolyl cis-trans isomerase activity"/>
    <property type="evidence" value="ECO:0007669"/>
    <property type="project" value="UniProtKB-UniRule"/>
</dbReference>
<dbReference type="GO" id="GO:0044183">
    <property type="term" value="F:protein folding chaperone"/>
    <property type="evidence" value="ECO:0007669"/>
    <property type="project" value="TreeGrafter"/>
</dbReference>
<dbReference type="GO" id="GO:0043022">
    <property type="term" value="F:ribosome binding"/>
    <property type="evidence" value="ECO:0007669"/>
    <property type="project" value="TreeGrafter"/>
</dbReference>
<dbReference type="GO" id="GO:0051083">
    <property type="term" value="P:'de novo' cotranslational protein folding"/>
    <property type="evidence" value="ECO:0007669"/>
    <property type="project" value="TreeGrafter"/>
</dbReference>
<dbReference type="GO" id="GO:0051301">
    <property type="term" value="P:cell division"/>
    <property type="evidence" value="ECO:0007669"/>
    <property type="project" value="UniProtKB-KW"/>
</dbReference>
<dbReference type="GO" id="GO:0061077">
    <property type="term" value="P:chaperone-mediated protein folding"/>
    <property type="evidence" value="ECO:0007669"/>
    <property type="project" value="TreeGrafter"/>
</dbReference>
<dbReference type="GO" id="GO:0015031">
    <property type="term" value="P:protein transport"/>
    <property type="evidence" value="ECO:0007669"/>
    <property type="project" value="UniProtKB-UniRule"/>
</dbReference>
<dbReference type="GO" id="GO:0043335">
    <property type="term" value="P:protein unfolding"/>
    <property type="evidence" value="ECO:0007669"/>
    <property type="project" value="TreeGrafter"/>
</dbReference>
<dbReference type="FunFam" id="3.10.50.40:FF:000001">
    <property type="entry name" value="Trigger factor"/>
    <property type="match status" value="1"/>
</dbReference>
<dbReference type="FunFam" id="3.30.70.1050:FF:000002">
    <property type="entry name" value="Trigger factor"/>
    <property type="match status" value="1"/>
</dbReference>
<dbReference type="Gene3D" id="3.10.50.40">
    <property type="match status" value="1"/>
</dbReference>
<dbReference type="Gene3D" id="3.30.70.1050">
    <property type="entry name" value="Trigger factor ribosome-binding domain"/>
    <property type="match status" value="1"/>
</dbReference>
<dbReference type="Gene3D" id="1.10.3120.10">
    <property type="entry name" value="Trigger factor, C-terminal domain"/>
    <property type="match status" value="1"/>
</dbReference>
<dbReference type="HAMAP" id="MF_00303">
    <property type="entry name" value="Trigger_factor_Tig"/>
    <property type="match status" value="1"/>
</dbReference>
<dbReference type="InterPro" id="IPR046357">
    <property type="entry name" value="PPIase_dom_sf"/>
</dbReference>
<dbReference type="InterPro" id="IPR001179">
    <property type="entry name" value="PPIase_FKBP_dom"/>
</dbReference>
<dbReference type="InterPro" id="IPR005215">
    <property type="entry name" value="Trig_fac"/>
</dbReference>
<dbReference type="InterPro" id="IPR008880">
    <property type="entry name" value="Trigger_fac_C"/>
</dbReference>
<dbReference type="InterPro" id="IPR037041">
    <property type="entry name" value="Trigger_fac_C_sf"/>
</dbReference>
<dbReference type="InterPro" id="IPR008881">
    <property type="entry name" value="Trigger_fac_ribosome-bd_bac"/>
</dbReference>
<dbReference type="InterPro" id="IPR036611">
    <property type="entry name" value="Trigger_fac_ribosome-bd_sf"/>
</dbReference>
<dbReference type="InterPro" id="IPR027304">
    <property type="entry name" value="Trigger_fact/SurA_dom_sf"/>
</dbReference>
<dbReference type="NCBIfam" id="TIGR00115">
    <property type="entry name" value="tig"/>
    <property type="match status" value="1"/>
</dbReference>
<dbReference type="PANTHER" id="PTHR30560">
    <property type="entry name" value="TRIGGER FACTOR CHAPERONE AND PEPTIDYL-PROLYL CIS/TRANS ISOMERASE"/>
    <property type="match status" value="1"/>
</dbReference>
<dbReference type="PANTHER" id="PTHR30560:SF3">
    <property type="entry name" value="TRIGGER FACTOR-LIKE PROTEIN TIG, CHLOROPLASTIC"/>
    <property type="match status" value="1"/>
</dbReference>
<dbReference type="Pfam" id="PF00254">
    <property type="entry name" value="FKBP_C"/>
    <property type="match status" value="1"/>
</dbReference>
<dbReference type="Pfam" id="PF05698">
    <property type="entry name" value="Trigger_C"/>
    <property type="match status" value="1"/>
</dbReference>
<dbReference type="Pfam" id="PF05697">
    <property type="entry name" value="Trigger_N"/>
    <property type="match status" value="1"/>
</dbReference>
<dbReference type="PIRSF" id="PIRSF003095">
    <property type="entry name" value="Trigger_factor"/>
    <property type="match status" value="1"/>
</dbReference>
<dbReference type="SUPFAM" id="SSF54534">
    <property type="entry name" value="FKBP-like"/>
    <property type="match status" value="1"/>
</dbReference>
<dbReference type="SUPFAM" id="SSF109998">
    <property type="entry name" value="Triger factor/SurA peptide-binding domain-like"/>
    <property type="match status" value="1"/>
</dbReference>
<dbReference type="SUPFAM" id="SSF102735">
    <property type="entry name" value="Trigger factor ribosome-binding domain"/>
    <property type="match status" value="1"/>
</dbReference>
<dbReference type="PROSITE" id="PS50059">
    <property type="entry name" value="FKBP_PPIASE"/>
    <property type="match status" value="1"/>
</dbReference>
<comment type="function">
    <text evidence="1">Involved in protein export. Acts as a chaperone by maintaining the newly synthesized protein in an open conformation. Functions as a peptidyl-prolyl cis-trans isomerase.</text>
</comment>
<comment type="catalytic activity">
    <reaction evidence="1">
        <text>[protein]-peptidylproline (omega=180) = [protein]-peptidylproline (omega=0)</text>
        <dbReference type="Rhea" id="RHEA:16237"/>
        <dbReference type="Rhea" id="RHEA-COMP:10747"/>
        <dbReference type="Rhea" id="RHEA-COMP:10748"/>
        <dbReference type="ChEBI" id="CHEBI:83833"/>
        <dbReference type="ChEBI" id="CHEBI:83834"/>
        <dbReference type="EC" id="5.2.1.8"/>
    </reaction>
</comment>
<comment type="subcellular location">
    <subcellularLocation>
        <location>Cytoplasm</location>
    </subcellularLocation>
    <text evidence="1">About half TF is bound to the ribosome near the polypeptide exit tunnel while the other half is free in the cytoplasm.</text>
</comment>
<comment type="domain">
    <text evidence="1">Consists of 3 domains; the N-terminus binds the ribosome, the middle domain has PPIase activity, while the C-terminus has intrinsic chaperone activity on its own.</text>
</comment>
<comment type="similarity">
    <text evidence="1">Belongs to the FKBP-type PPIase family. Tig subfamily.</text>
</comment>
<reference key="1">
    <citation type="journal article" date="2001" name="Lancet">
        <title>Whole genome sequencing of meticillin-resistant Staphylococcus aureus.</title>
        <authorList>
            <person name="Kuroda M."/>
            <person name="Ohta T."/>
            <person name="Uchiyama I."/>
            <person name="Baba T."/>
            <person name="Yuzawa H."/>
            <person name="Kobayashi I."/>
            <person name="Cui L."/>
            <person name="Oguchi A."/>
            <person name="Aoki K."/>
            <person name="Nagai Y."/>
            <person name="Lian J.-Q."/>
            <person name="Ito T."/>
            <person name="Kanamori M."/>
            <person name="Matsumaru H."/>
            <person name="Maruyama A."/>
            <person name="Murakami H."/>
            <person name="Hosoyama A."/>
            <person name="Mizutani-Ui Y."/>
            <person name="Takahashi N.K."/>
            <person name="Sawano T."/>
            <person name="Inoue R."/>
            <person name="Kaito C."/>
            <person name="Sekimizu K."/>
            <person name="Hirakawa H."/>
            <person name="Kuhara S."/>
            <person name="Goto S."/>
            <person name="Yabuzaki J."/>
            <person name="Kanehisa M."/>
            <person name="Yamashita A."/>
            <person name="Oshima K."/>
            <person name="Furuya K."/>
            <person name="Yoshino C."/>
            <person name="Shiba T."/>
            <person name="Hattori M."/>
            <person name="Ogasawara N."/>
            <person name="Hayashi H."/>
            <person name="Hiramatsu K."/>
        </authorList>
    </citation>
    <scope>NUCLEOTIDE SEQUENCE [LARGE SCALE GENOMIC DNA]</scope>
    <source>
        <strain>N315</strain>
    </source>
</reference>
<reference key="2">
    <citation type="journal article" date="2005" name="J. Microbiol. Methods">
        <title>Correlation of proteomic and transcriptomic profiles of Staphylococcus aureus during the post-exponential phase of growth.</title>
        <authorList>
            <person name="Scherl A."/>
            <person name="Francois P."/>
            <person name="Bento M."/>
            <person name="Deshusses J.M."/>
            <person name="Charbonnier Y."/>
            <person name="Converset V."/>
            <person name="Huyghe A."/>
            <person name="Walter N."/>
            <person name="Hoogland C."/>
            <person name="Appel R.D."/>
            <person name="Sanchez J.-C."/>
            <person name="Zimmermann-Ivol C.G."/>
            <person name="Corthals G.L."/>
            <person name="Hochstrasser D.F."/>
            <person name="Schrenzel J."/>
        </authorList>
    </citation>
    <scope>IDENTIFICATION BY MASS SPECTROMETRY</scope>
    <source>
        <strain>N315</strain>
    </source>
</reference>
<reference key="3">
    <citation type="submission" date="2007-10" db="UniProtKB">
        <title>Shotgun proteomic analysis of total and membrane protein extracts of S. aureus strain N315.</title>
        <authorList>
            <person name="Vaezzadeh A.R."/>
            <person name="Deshusses J."/>
            <person name="Lescuyer P."/>
            <person name="Hochstrasser D.F."/>
        </authorList>
    </citation>
    <scope>IDENTIFICATION BY MASS SPECTROMETRY [LARGE SCALE ANALYSIS]</scope>
    <source>
        <strain>N315</strain>
    </source>
</reference>
<keyword id="KW-0131">Cell cycle</keyword>
<keyword id="KW-0132">Cell division</keyword>
<keyword id="KW-0143">Chaperone</keyword>
<keyword id="KW-0963">Cytoplasm</keyword>
<keyword id="KW-0413">Isomerase</keyword>
<keyword id="KW-0697">Rotamase</keyword>